<name>NTPP_MYCS2</name>
<comment type="function">
    <text evidence="1">Nucleoside triphosphate pyrophosphatase. May have a dual role in cell division arrest and in preventing the incorporation of modified nucleotides into cellular nucleic acids.</text>
</comment>
<comment type="catalytic activity">
    <reaction evidence="1">
        <text>a ribonucleoside 5'-triphosphate + H2O = a ribonucleoside 5'-phosphate + diphosphate + H(+)</text>
        <dbReference type="Rhea" id="RHEA:23996"/>
        <dbReference type="ChEBI" id="CHEBI:15377"/>
        <dbReference type="ChEBI" id="CHEBI:15378"/>
        <dbReference type="ChEBI" id="CHEBI:33019"/>
        <dbReference type="ChEBI" id="CHEBI:58043"/>
        <dbReference type="ChEBI" id="CHEBI:61557"/>
        <dbReference type="EC" id="3.6.1.9"/>
    </reaction>
</comment>
<comment type="catalytic activity">
    <reaction evidence="1">
        <text>a 2'-deoxyribonucleoside 5'-triphosphate + H2O = a 2'-deoxyribonucleoside 5'-phosphate + diphosphate + H(+)</text>
        <dbReference type="Rhea" id="RHEA:44644"/>
        <dbReference type="ChEBI" id="CHEBI:15377"/>
        <dbReference type="ChEBI" id="CHEBI:15378"/>
        <dbReference type="ChEBI" id="CHEBI:33019"/>
        <dbReference type="ChEBI" id="CHEBI:61560"/>
        <dbReference type="ChEBI" id="CHEBI:65317"/>
        <dbReference type="EC" id="3.6.1.9"/>
    </reaction>
</comment>
<comment type="cofactor">
    <cofactor evidence="1">
        <name>a divalent metal cation</name>
        <dbReference type="ChEBI" id="CHEBI:60240"/>
    </cofactor>
</comment>
<comment type="subcellular location">
    <subcellularLocation>
        <location evidence="1">Cytoplasm</location>
    </subcellularLocation>
</comment>
<comment type="similarity">
    <text evidence="1">Belongs to the Maf family.</text>
</comment>
<accession>A0QTE5</accession>
<accession>I7G6H4</accession>
<dbReference type="EC" id="3.6.1.9" evidence="1"/>
<dbReference type="EMBL" id="CP000480">
    <property type="protein sequence ID" value="ABK71686.1"/>
    <property type="molecule type" value="Genomic_DNA"/>
</dbReference>
<dbReference type="EMBL" id="CP001663">
    <property type="protein sequence ID" value="AFP38239.1"/>
    <property type="molecule type" value="Genomic_DNA"/>
</dbReference>
<dbReference type="RefSeq" id="WP_011727924.1">
    <property type="nucleotide sequence ID" value="NZ_SIJM01000028.1"/>
</dbReference>
<dbReference type="RefSeq" id="YP_886183.1">
    <property type="nucleotide sequence ID" value="NC_008596.1"/>
</dbReference>
<dbReference type="SMR" id="A0QTE5"/>
<dbReference type="STRING" id="246196.MSMEG_1811"/>
<dbReference type="PaxDb" id="246196-MSMEI_1767"/>
<dbReference type="KEGG" id="msb:LJ00_09030"/>
<dbReference type="KEGG" id="msg:MSMEI_1767"/>
<dbReference type="KEGG" id="msm:MSMEG_1811"/>
<dbReference type="PATRIC" id="fig|246196.19.peg.1791"/>
<dbReference type="eggNOG" id="COG0424">
    <property type="taxonomic scope" value="Bacteria"/>
</dbReference>
<dbReference type="OrthoDB" id="3527985at2"/>
<dbReference type="Proteomes" id="UP000000757">
    <property type="component" value="Chromosome"/>
</dbReference>
<dbReference type="Proteomes" id="UP000006158">
    <property type="component" value="Chromosome"/>
</dbReference>
<dbReference type="GO" id="GO:0005737">
    <property type="term" value="C:cytoplasm"/>
    <property type="evidence" value="ECO:0007669"/>
    <property type="project" value="UniProtKB-SubCell"/>
</dbReference>
<dbReference type="GO" id="GO:0047429">
    <property type="term" value="F:nucleoside triphosphate diphosphatase activity"/>
    <property type="evidence" value="ECO:0007669"/>
    <property type="project" value="UniProtKB-EC"/>
</dbReference>
<dbReference type="GO" id="GO:0009117">
    <property type="term" value="P:nucleotide metabolic process"/>
    <property type="evidence" value="ECO:0007669"/>
    <property type="project" value="UniProtKB-KW"/>
</dbReference>
<dbReference type="CDD" id="cd00555">
    <property type="entry name" value="Maf"/>
    <property type="match status" value="1"/>
</dbReference>
<dbReference type="Gene3D" id="3.90.950.10">
    <property type="match status" value="1"/>
</dbReference>
<dbReference type="HAMAP" id="MF_00528">
    <property type="entry name" value="Maf"/>
    <property type="match status" value="1"/>
</dbReference>
<dbReference type="InterPro" id="IPR029001">
    <property type="entry name" value="ITPase-like_fam"/>
</dbReference>
<dbReference type="InterPro" id="IPR003697">
    <property type="entry name" value="Maf-like"/>
</dbReference>
<dbReference type="NCBIfam" id="TIGR00172">
    <property type="entry name" value="maf"/>
    <property type="match status" value="1"/>
</dbReference>
<dbReference type="PANTHER" id="PTHR43213">
    <property type="entry name" value="BIFUNCTIONAL DTTP/UTP PYROPHOSPHATASE/METHYLTRANSFERASE PROTEIN-RELATED"/>
    <property type="match status" value="1"/>
</dbReference>
<dbReference type="PANTHER" id="PTHR43213:SF5">
    <property type="entry name" value="BIFUNCTIONAL DTTP_UTP PYROPHOSPHATASE_METHYLTRANSFERASE PROTEIN-RELATED"/>
    <property type="match status" value="1"/>
</dbReference>
<dbReference type="Pfam" id="PF02545">
    <property type="entry name" value="Maf"/>
    <property type="match status" value="1"/>
</dbReference>
<dbReference type="PIRSF" id="PIRSF006305">
    <property type="entry name" value="Maf"/>
    <property type="match status" value="1"/>
</dbReference>
<dbReference type="SUPFAM" id="SSF52972">
    <property type="entry name" value="ITPase-like"/>
    <property type="match status" value="1"/>
</dbReference>
<reference key="1">
    <citation type="submission" date="2006-10" db="EMBL/GenBank/DDBJ databases">
        <authorList>
            <person name="Fleischmann R.D."/>
            <person name="Dodson R.J."/>
            <person name="Haft D.H."/>
            <person name="Merkel J.S."/>
            <person name="Nelson W.C."/>
            <person name="Fraser C.M."/>
        </authorList>
    </citation>
    <scope>NUCLEOTIDE SEQUENCE [LARGE SCALE GENOMIC DNA]</scope>
    <source>
        <strain>ATCC 700084 / mc(2)155</strain>
    </source>
</reference>
<reference key="2">
    <citation type="journal article" date="2007" name="Genome Biol.">
        <title>Interrupted coding sequences in Mycobacterium smegmatis: authentic mutations or sequencing errors?</title>
        <authorList>
            <person name="Deshayes C."/>
            <person name="Perrodou E."/>
            <person name="Gallien S."/>
            <person name="Euphrasie D."/>
            <person name="Schaeffer C."/>
            <person name="Van-Dorsselaer A."/>
            <person name="Poch O."/>
            <person name="Lecompte O."/>
            <person name="Reyrat J.-M."/>
        </authorList>
    </citation>
    <scope>NUCLEOTIDE SEQUENCE [LARGE SCALE GENOMIC DNA]</scope>
    <source>
        <strain>ATCC 700084 / mc(2)155</strain>
    </source>
</reference>
<reference key="3">
    <citation type="journal article" date="2009" name="Genome Res.">
        <title>Ortho-proteogenomics: multiple proteomes investigation through orthology and a new MS-based protocol.</title>
        <authorList>
            <person name="Gallien S."/>
            <person name="Perrodou E."/>
            <person name="Carapito C."/>
            <person name="Deshayes C."/>
            <person name="Reyrat J.-M."/>
            <person name="Van Dorsselaer A."/>
            <person name="Poch O."/>
            <person name="Schaeffer C."/>
            <person name="Lecompte O."/>
        </authorList>
    </citation>
    <scope>NUCLEOTIDE SEQUENCE [LARGE SCALE GENOMIC DNA]</scope>
    <source>
        <strain>ATCC 700084 / mc(2)155</strain>
    </source>
</reference>
<protein>
    <recommendedName>
        <fullName evidence="1">Nucleoside triphosphate pyrophosphatase</fullName>
        <ecNumber evidence="1">3.6.1.9</ecNumber>
    </recommendedName>
    <alternativeName>
        <fullName evidence="1">Nucleotide pyrophosphatase</fullName>
        <shortName evidence="1">Nucleotide PPase</shortName>
    </alternativeName>
</protein>
<feature type="chain" id="PRO_1000146296" description="Nucleoside triphosphate pyrophosphatase">
    <location>
        <begin position="1"/>
        <end position="211"/>
    </location>
</feature>
<feature type="active site" description="Proton acceptor" evidence="1">
    <location>
        <position position="78"/>
    </location>
</feature>
<evidence type="ECO:0000255" key="1">
    <source>
        <dbReference type="HAMAP-Rule" id="MF_00528"/>
    </source>
</evidence>
<proteinExistence type="inferred from homology"/>
<keyword id="KW-0963">Cytoplasm</keyword>
<keyword id="KW-0378">Hydrolase</keyword>
<keyword id="KW-0546">Nucleotide metabolism</keyword>
<keyword id="KW-1185">Reference proteome</keyword>
<gene>
    <name type="ordered locus">MSMEG_1811</name>
    <name type="ordered locus">MSMEI_1767</name>
</gene>
<sequence length="211" mass="21891">MTRVVLGSASSGRLSVLRNAGIEPLVVVSDVDEDAIIAAHPSAPPDQVVTALASAKAGEVVTRLSHSDAADAVVIGCDSMLLLDGKLCGKPGSVDAAHRQWQTMSGRSADLVTGHCVIRLHDGEIVGNVTESSGTTVHFGTPSPDDLSAYLATGEPLWVAGAFTLDGLGGWFIDRIEGDPSNVIGVSLPVLRALFERLEVSVADLWSANGR</sequence>
<organism>
    <name type="scientific">Mycolicibacterium smegmatis (strain ATCC 700084 / mc(2)155)</name>
    <name type="common">Mycobacterium smegmatis</name>
    <dbReference type="NCBI Taxonomy" id="246196"/>
    <lineage>
        <taxon>Bacteria</taxon>
        <taxon>Bacillati</taxon>
        <taxon>Actinomycetota</taxon>
        <taxon>Actinomycetes</taxon>
        <taxon>Mycobacteriales</taxon>
        <taxon>Mycobacteriaceae</taxon>
        <taxon>Mycolicibacterium</taxon>
    </lineage>
</organism>